<proteinExistence type="inferred from homology"/>
<sequence length="149" mass="15784">MQVILLDKVANLGSLGDQVNVKAGYARNFLVPQGKAVPATKKNVEYFEARRAELEAKLADVLAAANARAEKINALETVTIASKAGDEGKLFGSIGTRDIADAVTAAGVDVAKSEVRLPNGVLRTTGEHEVNFQVHSEVFAKVIINVVAE</sequence>
<gene>
    <name evidence="1" type="primary">rplI</name>
    <name type="ordered locus">SARI_03238</name>
</gene>
<keyword id="KW-1185">Reference proteome</keyword>
<keyword id="KW-0687">Ribonucleoprotein</keyword>
<keyword id="KW-0689">Ribosomal protein</keyword>
<keyword id="KW-0694">RNA-binding</keyword>
<keyword id="KW-0699">rRNA-binding</keyword>
<dbReference type="EMBL" id="CP000880">
    <property type="protein sequence ID" value="ABX23074.1"/>
    <property type="molecule type" value="Genomic_DNA"/>
</dbReference>
<dbReference type="SMR" id="A9MF07"/>
<dbReference type="STRING" id="41514.SARI_03238"/>
<dbReference type="KEGG" id="ses:SARI_03238"/>
<dbReference type="HOGENOM" id="CLU_078938_4_1_6"/>
<dbReference type="Proteomes" id="UP000002084">
    <property type="component" value="Chromosome"/>
</dbReference>
<dbReference type="GO" id="GO:1990904">
    <property type="term" value="C:ribonucleoprotein complex"/>
    <property type="evidence" value="ECO:0007669"/>
    <property type="project" value="UniProtKB-KW"/>
</dbReference>
<dbReference type="GO" id="GO:0005840">
    <property type="term" value="C:ribosome"/>
    <property type="evidence" value="ECO:0007669"/>
    <property type="project" value="UniProtKB-KW"/>
</dbReference>
<dbReference type="GO" id="GO:0019843">
    <property type="term" value="F:rRNA binding"/>
    <property type="evidence" value="ECO:0007669"/>
    <property type="project" value="UniProtKB-UniRule"/>
</dbReference>
<dbReference type="GO" id="GO:0003735">
    <property type="term" value="F:structural constituent of ribosome"/>
    <property type="evidence" value="ECO:0007669"/>
    <property type="project" value="InterPro"/>
</dbReference>
<dbReference type="GO" id="GO:0006412">
    <property type="term" value="P:translation"/>
    <property type="evidence" value="ECO:0007669"/>
    <property type="project" value="UniProtKB-UniRule"/>
</dbReference>
<dbReference type="FunFam" id="3.10.430.100:FF:000001">
    <property type="entry name" value="50S ribosomal protein L9"/>
    <property type="match status" value="1"/>
</dbReference>
<dbReference type="FunFam" id="3.40.5.10:FF:000001">
    <property type="entry name" value="50S ribosomal protein L9"/>
    <property type="match status" value="1"/>
</dbReference>
<dbReference type="Gene3D" id="3.10.430.100">
    <property type="entry name" value="Ribosomal protein L9, C-terminal domain"/>
    <property type="match status" value="1"/>
</dbReference>
<dbReference type="Gene3D" id="3.40.5.10">
    <property type="entry name" value="Ribosomal protein L9, N-terminal domain"/>
    <property type="match status" value="1"/>
</dbReference>
<dbReference type="HAMAP" id="MF_00503">
    <property type="entry name" value="Ribosomal_bL9"/>
    <property type="match status" value="1"/>
</dbReference>
<dbReference type="InterPro" id="IPR000244">
    <property type="entry name" value="Ribosomal_bL9"/>
</dbReference>
<dbReference type="InterPro" id="IPR009027">
    <property type="entry name" value="Ribosomal_bL9/RNase_H1_N"/>
</dbReference>
<dbReference type="InterPro" id="IPR020594">
    <property type="entry name" value="Ribosomal_bL9_bac/chp"/>
</dbReference>
<dbReference type="InterPro" id="IPR020069">
    <property type="entry name" value="Ribosomal_bL9_C"/>
</dbReference>
<dbReference type="InterPro" id="IPR036791">
    <property type="entry name" value="Ribosomal_bL9_C_sf"/>
</dbReference>
<dbReference type="InterPro" id="IPR020070">
    <property type="entry name" value="Ribosomal_bL9_N"/>
</dbReference>
<dbReference type="InterPro" id="IPR036935">
    <property type="entry name" value="Ribosomal_bL9_N_sf"/>
</dbReference>
<dbReference type="NCBIfam" id="TIGR00158">
    <property type="entry name" value="L9"/>
    <property type="match status" value="1"/>
</dbReference>
<dbReference type="PANTHER" id="PTHR21368">
    <property type="entry name" value="50S RIBOSOMAL PROTEIN L9"/>
    <property type="match status" value="1"/>
</dbReference>
<dbReference type="Pfam" id="PF03948">
    <property type="entry name" value="Ribosomal_L9_C"/>
    <property type="match status" value="1"/>
</dbReference>
<dbReference type="Pfam" id="PF01281">
    <property type="entry name" value="Ribosomal_L9_N"/>
    <property type="match status" value="1"/>
</dbReference>
<dbReference type="SUPFAM" id="SSF55658">
    <property type="entry name" value="L9 N-domain-like"/>
    <property type="match status" value="1"/>
</dbReference>
<dbReference type="SUPFAM" id="SSF55653">
    <property type="entry name" value="Ribosomal protein L9 C-domain"/>
    <property type="match status" value="1"/>
</dbReference>
<dbReference type="PROSITE" id="PS00651">
    <property type="entry name" value="RIBOSOMAL_L9"/>
    <property type="match status" value="1"/>
</dbReference>
<protein>
    <recommendedName>
        <fullName evidence="1">Large ribosomal subunit protein bL9</fullName>
    </recommendedName>
    <alternativeName>
        <fullName evidence="2">50S ribosomal protein L9</fullName>
    </alternativeName>
</protein>
<comment type="function">
    <text evidence="1">Binds to the 23S rRNA.</text>
</comment>
<comment type="similarity">
    <text evidence="1">Belongs to the bacterial ribosomal protein bL9 family.</text>
</comment>
<accession>A9MF07</accession>
<evidence type="ECO:0000255" key="1">
    <source>
        <dbReference type="HAMAP-Rule" id="MF_00503"/>
    </source>
</evidence>
<evidence type="ECO:0000305" key="2"/>
<organism>
    <name type="scientific">Salmonella arizonae (strain ATCC BAA-731 / CDC346-86 / RSK2980)</name>
    <dbReference type="NCBI Taxonomy" id="41514"/>
    <lineage>
        <taxon>Bacteria</taxon>
        <taxon>Pseudomonadati</taxon>
        <taxon>Pseudomonadota</taxon>
        <taxon>Gammaproteobacteria</taxon>
        <taxon>Enterobacterales</taxon>
        <taxon>Enterobacteriaceae</taxon>
        <taxon>Salmonella</taxon>
    </lineage>
</organism>
<feature type="chain" id="PRO_1000081497" description="Large ribosomal subunit protein bL9">
    <location>
        <begin position="1"/>
        <end position="149"/>
    </location>
</feature>
<name>RL9_SALAR</name>
<reference key="1">
    <citation type="submission" date="2007-11" db="EMBL/GenBank/DDBJ databases">
        <authorList>
            <consortium name="The Salmonella enterica serovar Arizonae Genome Sequencing Project"/>
            <person name="McClelland M."/>
            <person name="Sanderson E.K."/>
            <person name="Porwollik S."/>
            <person name="Spieth J."/>
            <person name="Clifton W.S."/>
            <person name="Fulton R."/>
            <person name="Chunyan W."/>
            <person name="Wollam A."/>
            <person name="Shah N."/>
            <person name="Pepin K."/>
            <person name="Bhonagiri V."/>
            <person name="Nash W."/>
            <person name="Johnson M."/>
            <person name="Thiruvilangam P."/>
            <person name="Wilson R."/>
        </authorList>
    </citation>
    <scope>NUCLEOTIDE SEQUENCE [LARGE SCALE GENOMIC DNA]</scope>
    <source>
        <strain>ATCC BAA-731 / CDC346-86 / RSK2980</strain>
    </source>
</reference>